<protein>
    <recommendedName>
        <fullName evidence="6">Receptor-like protein kinase 7</fullName>
        <ecNumber evidence="7">2.7.11.1</ecNumber>
    </recommendedName>
</protein>
<keyword id="KW-0025">Alternative splicing</keyword>
<keyword id="KW-0067">ATP-binding</keyword>
<keyword id="KW-0325">Glycoprotein</keyword>
<keyword id="KW-0418">Kinase</keyword>
<keyword id="KW-0433">Leucine-rich repeat</keyword>
<keyword id="KW-0472">Membrane</keyword>
<keyword id="KW-0547">Nucleotide-binding</keyword>
<keyword id="KW-0611">Plant defense</keyword>
<keyword id="KW-0675">Receptor</keyword>
<keyword id="KW-1185">Reference proteome</keyword>
<keyword id="KW-0677">Repeat</keyword>
<keyword id="KW-0723">Serine/threonine-protein kinase</keyword>
<keyword id="KW-0732">Signal</keyword>
<keyword id="KW-0346">Stress response</keyword>
<keyword id="KW-0808">Transferase</keyword>
<keyword id="KW-0812">Transmembrane</keyword>
<keyword id="KW-1133">Transmembrane helix</keyword>
<comment type="function">
    <text evidence="4 5">Plays a role in pattern-triggered immunity (PTI) signaling induced by pathogen-associated molecular patterns (PAMPs). Acts as a receptor for PIP1 defense peptide. PIP1 is an endogenous secreted peptide that acts as elicitor of immune response and positive regulator of defense response (PubMed:25188390). Involved in the control of seed germination speed, in tolerance to oxidative stress and in maintaining seed longevity (PubMed:20811905).</text>
</comment>
<comment type="catalytic activity">
    <reaction evidence="7">
        <text>L-seryl-[protein] + ATP = O-phospho-L-seryl-[protein] + ADP + H(+)</text>
        <dbReference type="Rhea" id="RHEA:17989"/>
        <dbReference type="Rhea" id="RHEA-COMP:9863"/>
        <dbReference type="Rhea" id="RHEA-COMP:11604"/>
        <dbReference type="ChEBI" id="CHEBI:15378"/>
        <dbReference type="ChEBI" id="CHEBI:29999"/>
        <dbReference type="ChEBI" id="CHEBI:30616"/>
        <dbReference type="ChEBI" id="CHEBI:83421"/>
        <dbReference type="ChEBI" id="CHEBI:456216"/>
        <dbReference type="EC" id="2.7.11.1"/>
    </reaction>
</comment>
<comment type="catalytic activity">
    <reaction evidence="7">
        <text>L-threonyl-[protein] + ATP = O-phospho-L-threonyl-[protein] + ADP + H(+)</text>
        <dbReference type="Rhea" id="RHEA:46608"/>
        <dbReference type="Rhea" id="RHEA-COMP:11060"/>
        <dbReference type="Rhea" id="RHEA-COMP:11605"/>
        <dbReference type="ChEBI" id="CHEBI:15378"/>
        <dbReference type="ChEBI" id="CHEBI:30013"/>
        <dbReference type="ChEBI" id="CHEBI:30616"/>
        <dbReference type="ChEBI" id="CHEBI:61977"/>
        <dbReference type="ChEBI" id="CHEBI:456216"/>
        <dbReference type="EC" id="2.7.11.1"/>
    </reaction>
</comment>
<comment type="subunit">
    <text evidence="5">Interacts with PIP1.</text>
</comment>
<comment type="interaction">
    <interactant intactId="EBI-20651307">
        <id>F4I2N7-2</id>
    </interactant>
    <interactant intactId="EBI-16954597">
        <id>C0LGE0</id>
        <label>At1g07650</label>
    </interactant>
    <organismsDiffer>false</organismsDiffer>
    <experiments>3</experiments>
</comment>
<comment type="interaction">
    <interactant intactId="EBI-20651307">
        <id>F4I2N7-2</id>
    </interactant>
    <interactant intactId="EBI-20651541">
        <id>C0LGJ9</id>
        <label>At2g02780</label>
    </interactant>
    <organismsDiffer>false</organismsDiffer>
    <experiments>2</experiments>
</comment>
<comment type="interaction">
    <interactant intactId="EBI-20651307">
        <id>F4I2N7-2</id>
    </interactant>
    <interactant intactId="EBI-17123993">
        <id>Q9LT96</id>
        <label>At5g49770</label>
    </interactant>
    <organismsDiffer>false</organismsDiffer>
    <experiments>3</experiments>
</comment>
<comment type="interaction">
    <interactant intactId="EBI-20651307">
        <id>F4I2N7-2</id>
    </interactant>
    <interactant intactId="EBI-16934827">
        <id>Q8W4S5</id>
        <label>At5g63710</label>
    </interactant>
    <organismsDiffer>false</organismsDiffer>
    <experiments>2</experiments>
</comment>
<comment type="interaction">
    <interactant intactId="EBI-20651307">
        <id>F4I2N7-2</id>
    </interactant>
    <interactant intactId="EBI-16955586">
        <id>Q9LVP0</id>
        <label>At5g63930</label>
    </interactant>
    <organismsDiffer>false</organismsDiffer>
    <experiments>2</experiments>
</comment>
<comment type="interaction">
    <interactant intactId="EBI-20651307">
        <id>F4I2N7-2</id>
    </interactant>
    <interactant intactId="EBI-20651518">
        <id>C0LGN7</id>
        <label>LRR-RLK</label>
    </interactant>
    <organismsDiffer>false</organismsDiffer>
    <experiments>2</experiments>
</comment>
<comment type="interaction">
    <interactant intactId="EBI-20651307">
        <id>F4I2N7-2</id>
    </interactant>
    <interactant intactId="EBI-16914400">
        <id>Q9LPT1</id>
        <label>PRK5</label>
    </interactant>
    <organismsDiffer>false</organismsDiffer>
    <experiments>2</experiments>
</comment>
<comment type="interaction">
    <interactant intactId="EBI-20651307">
        <id>F4I2N7-2</id>
    </interactant>
    <interactant intactId="EBI-20651307">
        <id>F4I2N7-2</id>
        <label>RLK7</label>
    </interactant>
    <organismsDiffer>false</organismsDiffer>
    <experiments>2</experiments>
</comment>
<comment type="subcellular location">
    <subcellularLocation>
        <location evidence="1">Membrane</location>
        <topology evidence="1">Single-pass membrane protein</topology>
    </subcellularLocation>
</comment>
<comment type="alternative products">
    <event type="alternative splicing"/>
    <isoform>
        <id>F4I2N7-1</id>
        <name>1</name>
        <sequence type="displayed"/>
    </isoform>
    <isoform>
        <id>F4I2N7-2</id>
        <name>2</name>
        <sequence type="described" ref="VSP_059529"/>
    </isoform>
</comment>
<comment type="tissue specificity">
    <text evidence="4">Expressed in roots, stems and dry seeds. Expressed at junctions between organs, such as the insertion zones of stamens, petals and sepals, the transition zones of floral stem and pedicel, pedicel and silique, and floral stem and cauline leaves.</text>
</comment>
<comment type="developmental stage">
    <text evidence="4">In the embryo, expressed from the heart stage to dry seeds. In germinating seeds, expression decreases during imbibition and increasees again 72 hours after imbibition, during the establishment of the seedling.</text>
</comment>
<comment type="disruption phenotype">
    <text evidence="4">Slightly delayed seed germination.</text>
</comment>
<comment type="miscellaneous">
    <molecule>Isoform 2</molecule>
    <text evidence="7">May be due to a competing acceptor splice site.</text>
</comment>
<comment type="similarity">
    <text evidence="7">Belongs to the protein kinase superfamily. Ser/Thr protein kinase family.</text>
</comment>
<comment type="sequence caution" evidence="7">
    <conflict type="erroneous gene model prediction">
        <sequence resource="EMBL-CDS" id="AAB60752"/>
    </conflict>
</comment>
<proteinExistence type="evidence at protein level"/>
<evidence type="ECO:0000255" key="1"/>
<evidence type="ECO:0000255" key="2">
    <source>
        <dbReference type="PROSITE-ProRule" id="PRU00159"/>
    </source>
</evidence>
<evidence type="ECO:0000255" key="3">
    <source>
        <dbReference type="PROSITE-ProRule" id="PRU00498"/>
    </source>
</evidence>
<evidence type="ECO:0000269" key="4">
    <source>
    </source>
</evidence>
<evidence type="ECO:0000269" key="5">
    <source>
    </source>
</evidence>
<evidence type="ECO:0000303" key="6">
    <source>
    </source>
</evidence>
<evidence type="ECO:0000305" key="7"/>
<evidence type="ECO:0000312" key="8">
    <source>
        <dbReference type="Araport" id="AT1G09970"/>
    </source>
</evidence>
<evidence type="ECO:0000312" key="9">
    <source>
        <dbReference type="EMBL" id="AAB60752.1"/>
    </source>
</evidence>
<dbReference type="EC" id="2.7.11.1" evidence="7"/>
<dbReference type="EMBL" id="FJ708631">
    <property type="protein sequence ID" value="ACN59227.1"/>
    <property type="molecule type" value="mRNA"/>
</dbReference>
<dbReference type="EMBL" id="AY050535">
    <property type="protein sequence ID" value="AAL12626.1"/>
    <property type="molecule type" value="mRNA"/>
</dbReference>
<dbReference type="EMBL" id="AC000132">
    <property type="protein sequence ID" value="AAB60752.1"/>
    <property type="status" value="ALT_SEQ"/>
    <property type="molecule type" value="Genomic_DNA"/>
</dbReference>
<dbReference type="EMBL" id="CP002684">
    <property type="protein sequence ID" value="AEE28522.1"/>
    <property type="molecule type" value="Genomic_DNA"/>
</dbReference>
<dbReference type="EMBL" id="CP002684">
    <property type="protein sequence ID" value="AEE28523.1"/>
    <property type="molecule type" value="Genomic_DNA"/>
</dbReference>
<dbReference type="EMBL" id="AY062680">
    <property type="protein sequence ID" value="AAL32758.1"/>
    <property type="molecule type" value="mRNA"/>
</dbReference>
<dbReference type="EMBL" id="AK221860">
    <property type="protein sequence ID" value="BAD94141.1"/>
    <property type="molecule type" value="mRNA"/>
</dbReference>
<dbReference type="PIR" id="B86234">
    <property type="entry name" value="B86234"/>
</dbReference>
<dbReference type="RefSeq" id="NP_172468.3">
    <molecule id="F4I2N7-1"/>
    <property type="nucleotide sequence ID" value="NM_100871.3"/>
</dbReference>
<dbReference type="RefSeq" id="NP_850942.1">
    <molecule id="F4I2N7-2"/>
    <property type="nucleotide sequence ID" value="NM_180611.2"/>
</dbReference>
<dbReference type="SMR" id="F4I2N7"/>
<dbReference type="FunCoup" id="F4I2N7">
    <property type="interactions" value="349"/>
</dbReference>
<dbReference type="IntAct" id="F4I2N7">
    <property type="interactions" value="59"/>
</dbReference>
<dbReference type="STRING" id="3702.F4I2N7"/>
<dbReference type="GlyCosmos" id="F4I2N7">
    <property type="glycosylation" value="12 sites, No reported glycans"/>
</dbReference>
<dbReference type="GlyGen" id="F4I2N7">
    <property type="glycosylation" value="12 sites"/>
</dbReference>
<dbReference type="PaxDb" id="3702-AT1G09970.2"/>
<dbReference type="ProteomicsDB" id="228180">
    <molecule id="F4I2N7-1"/>
</dbReference>
<dbReference type="EnsemblPlants" id="AT1G09970.1">
    <molecule id="F4I2N7-2"/>
    <property type="protein sequence ID" value="AT1G09970.1"/>
    <property type="gene ID" value="AT1G09970"/>
</dbReference>
<dbReference type="EnsemblPlants" id="AT1G09970.2">
    <molecule id="F4I2N7-1"/>
    <property type="protein sequence ID" value="AT1G09970.2"/>
    <property type="gene ID" value="AT1G09970"/>
</dbReference>
<dbReference type="GeneID" id="837531"/>
<dbReference type="Gramene" id="AT1G09970.1">
    <molecule id="F4I2N7-2"/>
    <property type="protein sequence ID" value="AT1G09970.1"/>
    <property type="gene ID" value="AT1G09970"/>
</dbReference>
<dbReference type="Gramene" id="AT1G09970.2">
    <molecule id="F4I2N7-1"/>
    <property type="protein sequence ID" value="AT1G09970.2"/>
    <property type="gene ID" value="AT1G09970"/>
</dbReference>
<dbReference type="KEGG" id="ath:AT1G09970"/>
<dbReference type="Araport" id="AT1G09970"/>
<dbReference type="TAIR" id="AT1G09970">
    <property type="gene designation" value="LRR XI-23"/>
</dbReference>
<dbReference type="eggNOG" id="ENOG502QVPY">
    <property type="taxonomic scope" value="Eukaryota"/>
</dbReference>
<dbReference type="HOGENOM" id="CLU_000288_22_1_1"/>
<dbReference type="InParanoid" id="F4I2N7"/>
<dbReference type="OMA" id="TGVDCAN"/>
<dbReference type="OrthoDB" id="2015831at2759"/>
<dbReference type="PhylomeDB" id="F4I2N7"/>
<dbReference type="PRO" id="PR:F4I2N7"/>
<dbReference type="Proteomes" id="UP000006548">
    <property type="component" value="Chromosome 1"/>
</dbReference>
<dbReference type="ExpressionAtlas" id="F4I2N7">
    <property type="expression patterns" value="baseline and differential"/>
</dbReference>
<dbReference type="GO" id="GO:0016020">
    <property type="term" value="C:membrane"/>
    <property type="evidence" value="ECO:0007669"/>
    <property type="project" value="UniProtKB-SubCell"/>
</dbReference>
<dbReference type="GO" id="GO:0005524">
    <property type="term" value="F:ATP binding"/>
    <property type="evidence" value="ECO:0007669"/>
    <property type="project" value="UniProtKB-KW"/>
</dbReference>
<dbReference type="GO" id="GO:0042802">
    <property type="term" value="F:identical protein binding"/>
    <property type="evidence" value="ECO:0000353"/>
    <property type="project" value="IntAct"/>
</dbReference>
<dbReference type="GO" id="GO:0042277">
    <property type="term" value="F:peptide binding"/>
    <property type="evidence" value="ECO:0000353"/>
    <property type="project" value="TAIR"/>
</dbReference>
<dbReference type="GO" id="GO:0001653">
    <property type="term" value="F:peptide receptor activity"/>
    <property type="evidence" value="ECO:0000314"/>
    <property type="project" value="UniProtKB"/>
</dbReference>
<dbReference type="GO" id="GO:0004672">
    <property type="term" value="F:protein kinase activity"/>
    <property type="evidence" value="ECO:0000314"/>
    <property type="project" value="TAIR"/>
</dbReference>
<dbReference type="GO" id="GO:0106310">
    <property type="term" value="F:protein serine kinase activity"/>
    <property type="evidence" value="ECO:0007669"/>
    <property type="project" value="RHEA"/>
</dbReference>
<dbReference type="GO" id="GO:0004674">
    <property type="term" value="F:protein serine/threonine kinase activity"/>
    <property type="evidence" value="ECO:0007669"/>
    <property type="project" value="UniProtKB-KW"/>
</dbReference>
<dbReference type="GO" id="GO:0045087">
    <property type="term" value="P:innate immune response"/>
    <property type="evidence" value="ECO:0000315"/>
    <property type="project" value="UniProtKB"/>
</dbReference>
<dbReference type="GO" id="GO:0046777">
    <property type="term" value="P:protein autophosphorylation"/>
    <property type="evidence" value="ECO:0000314"/>
    <property type="project" value="TAIR"/>
</dbReference>
<dbReference type="GO" id="GO:0006979">
    <property type="term" value="P:response to oxidative stress"/>
    <property type="evidence" value="ECO:0000315"/>
    <property type="project" value="TAIR"/>
</dbReference>
<dbReference type="GO" id="GO:0009845">
    <property type="term" value="P:seed germination"/>
    <property type="evidence" value="ECO:0000315"/>
    <property type="project" value="TAIR"/>
</dbReference>
<dbReference type="FunFam" id="3.80.10.10:FF:000453">
    <property type="entry name" value="Leucine-rich receptor-like protein kinase family protein"/>
    <property type="match status" value="1"/>
</dbReference>
<dbReference type="FunFam" id="3.80.10.10:FF:000233">
    <property type="entry name" value="Leucine-rich repeat receptor-like protein kinase TDR"/>
    <property type="match status" value="1"/>
</dbReference>
<dbReference type="FunFam" id="1.10.510.10:FF:000276">
    <property type="entry name" value="LRR receptor-like serine/threonine-protein kinase RCH1"/>
    <property type="match status" value="1"/>
</dbReference>
<dbReference type="FunFam" id="3.80.10.10:FF:000234">
    <property type="entry name" value="Probable inactive receptor kinase RLK902"/>
    <property type="match status" value="1"/>
</dbReference>
<dbReference type="FunFam" id="3.30.200.20:FF:000540">
    <property type="entry name" value="Receptor-like protein kinase HAIKU2"/>
    <property type="match status" value="1"/>
</dbReference>
<dbReference type="Gene3D" id="3.30.200.20">
    <property type="entry name" value="Phosphorylase Kinase, domain 1"/>
    <property type="match status" value="1"/>
</dbReference>
<dbReference type="Gene3D" id="3.80.10.10">
    <property type="entry name" value="Ribonuclease Inhibitor"/>
    <property type="match status" value="3"/>
</dbReference>
<dbReference type="Gene3D" id="1.10.510.10">
    <property type="entry name" value="Transferase(Phosphotransferase) domain 1"/>
    <property type="match status" value="1"/>
</dbReference>
<dbReference type="InterPro" id="IPR011009">
    <property type="entry name" value="Kinase-like_dom_sf"/>
</dbReference>
<dbReference type="InterPro" id="IPR001611">
    <property type="entry name" value="Leu-rich_rpt"/>
</dbReference>
<dbReference type="InterPro" id="IPR032675">
    <property type="entry name" value="LRR_dom_sf"/>
</dbReference>
<dbReference type="InterPro" id="IPR013210">
    <property type="entry name" value="LRR_N_plant-typ"/>
</dbReference>
<dbReference type="InterPro" id="IPR055414">
    <property type="entry name" value="LRR_R13L4/SHOC2-like"/>
</dbReference>
<dbReference type="InterPro" id="IPR050647">
    <property type="entry name" value="Plant_LRR-RLKs"/>
</dbReference>
<dbReference type="InterPro" id="IPR000719">
    <property type="entry name" value="Prot_kinase_dom"/>
</dbReference>
<dbReference type="InterPro" id="IPR008271">
    <property type="entry name" value="Ser/Thr_kinase_AS"/>
</dbReference>
<dbReference type="PANTHER" id="PTHR48056">
    <property type="entry name" value="LRR RECEPTOR-LIKE SERINE/THREONINE-PROTEIN KINASE-RELATED"/>
    <property type="match status" value="1"/>
</dbReference>
<dbReference type="PANTHER" id="PTHR48056:SF41">
    <property type="entry name" value="RECEPTOR-LIKE PROTEIN KINASE HAIKU2"/>
    <property type="match status" value="1"/>
</dbReference>
<dbReference type="Pfam" id="PF00560">
    <property type="entry name" value="LRR_1"/>
    <property type="match status" value="3"/>
</dbReference>
<dbReference type="Pfam" id="PF23598">
    <property type="entry name" value="LRR_14"/>
    <property type="match status" value="1"/>
</dbReference>
<dbReference type="Pfam" id="PF13855">
    <property type="entry name" value="LRR_8"/>
    <property type="match status" value="1"/>
</dbReference>
<dbReference type="Pfam" id="PF08263">
    <property type="entry name" value="LRRNT_2"/>
    <property type="match status" value="1"/>
</dbReference>
<dbReference type="Pfam" id="PF00069">
    <property type="entry name" value="Pkinase"/>
    <property type="match status" value="1"/>
</dbReference>
<dbReference type="SMART" id="SM00220">
    <property type="entry name" value="S_TKc"/>
    <property type="match status" value="1"/>
</dbReference>
<dbReference type="SUPFAM" id="SSF52058">
    <property type="entry name" value="L domain-like"/>
    <property type="match status" value="1"/>
</dbReference>
<dbReference type="SUPFAM" id="SSF56112">
    <property type="entry name" value="Protein kinase-like (PK-like)"/>
    <property type="match status" value="1"/>
</dbReference>
<dbReference type="SUPFAM" id="SSF52047">
    <property type="entry name" value="RNI-like"/>
    <property type="match status" value="1"/>
</dbReference>
<dbReference type="PROSITE" id="PS50011">
    <property type="entry name" value="PROTEIN_KINASE_DOM"/>
    <property type="match status" value="1"/>
</dbReference>
<dbReference type="PROSITE" id="PS00108">
    <property type="entry name" value="PROTEIN_KINASE_ST"/>
    <property type="match status" value="1"/>
</dbReference>
<accession>F4I2N7</accession>
<accession>O04517</accession>
<accession>Q56X19</accession>
<accession>Q8W4B5</accession>
<accession>Q941F6</accession>
<feature type="signal peptide" evidence="1">
    <location>
        <begin position="1"/>
        <end position="28"/>
    </location>
</feature>
<feature type="chain" id="PRO_5003309427" description="Receptor-like protein kinase 7" evidence="1">
    <location>
        <begin position="29"/>
        <end position="977"/>
    </location>
</feature>
<feature type="topological domain" description="Extracellular" evidence="7">
    <location>
        <begin position="29"/>
        <end position="608"/>
    </location>
</feature>
<feature type="transmembrane region" description="Helical" evidence="1">
    <location>
        <begin position="609"/>
        <end position="629"/>
    </location>
</feature>
<feature type="topological domain" description="Cytoplasmic" evidence="7">
    <location>
        <begin position="630"/>
        <end position="977"/>
    </location>
</feature>
<feature type="repeat" description="LRR 1" evidence="1">
    <location>
        <begin position="71"/>
        <end position="95"/>
    </location>
</feature>
<feature type="repeat" description="LRR 2" evidence="1">
    <location>
        <begin position="96"/>
        <end position="119"/>
    </location>
</feature>
<feature type="repeat" description="LRR 3" evidence="1">
    <location>
        <begin position="121"/>
        <end position="145"/>
    </location>
</feature>
<feature type="repeat" description="LRR 4" evidence="1">
    <location>
        <begin position="168"/>
        <end position="194"/>
    </location>
</feature>
<feature type="repeat" description="LRR 5" evidence="1">
    <location>
        <begin position="195"/>
        <end position="218"/>
    </location>
</feature>
<feature type="repeat" description="LRR 6" evidence="1">
    <location>
        <begin position="219"/>
        <end position="242"/>
    </location>
</feature>
<feature type="repeat" description="LRR 7" evidence="1">
    <location>
        <begin position="244"/>
        <end position="265"/>
    </location>
</feature>
<feature type="repeat" description="LRR 8" evidence="1">
    <location>
        <begin position="267"/>
        <end position="289"/>
    </location>
</feature>
<feature type="repeat" description="LRR 9" evidence="1">
    <location>
        <begin position="290"/>
        <end position="312"/>
    </location>
</feature>
<feature type="repeat" description="LRR 10" evidence="1">
    <location>
        <begin position="313"/>
        <end position="337"/>
    </location>
</feature>
<feature type="repeat" description="LRR 11" evidence="1">
    <location>
        <begin position="339"/>
        <end position="361"/>
    </location>
</feature>
<feature type="repeat" description="LRR 12" evidence="1">
    <location>
        <begin position="362"/>
        <end position="385"/>
    </location>
</feature>
<feature type="repeat" description="LRR 13" evidence="1">
    <location>
        <begin position="386"/>
        <end position="409"/>
    </location>
</feature>
<feature type="repeat" description="LRR 14" evidence="1">
    <location>
        <begin position="411"/>
        <end position="433"/>
    </location>
</feature>
<feature type="repeat" description="LRR 15" evidence="1">
    <location>
        <begin position="434"/>
        <end position="457"/>
    </location>
</feature>
<feature type="repeat" description="LRR 16" evidence="1">
    <location>
        <begin position="458"/>
        <end position="481"/>
    </location>
</feature>
<feature type="repeat" description="LRR 17" evidence="1">
    <location>
        <begin position="482"/>
        <end position="505"/>
    </location>
</feature>
<feature type="repeat" description="LRR 18" evidence="1">
    <location>
        <begin position="507"/>
        <end position="529"/>
    </location>
</feature>
<feature type="repeat" description="LRR 19" evidence="1">
    <location>
        <begin position="530"/>
        <end position="553"/>
    </location>
</feature>
<feature type="repeat" description="LRR 20" evidence="1">
    <location>
        <begin position="555"/>
        <end position="578"/>
    </location>
</feature>
<feature type="domain" description="Protein kinase" evidence="2">
    <location>
        <begin position="666"/>
        <end position="959"/>
    </location>
</feature>
<feature type="active site" description="Proton acceptor" evidence="2">
    <location>
        <position position="805"/>
    </location>
</feature>
<feature type="binding site" evidence="2">
    <location>
        <begin position="672"/>
        <end position="680"/>
    </location>
    <ligand>
        <name>ATP</name>
        <dbReference type="ChEBI" id="CHEBI:30616"/>
    </ligand>
</feature>
<feature type="binding site" evidence="2">
    <location>
        <position position="694"/>
    </location>
    <ligand>
        <name>ATP</name>
        <dbReference type="ChEBI" id="CHEBI:30616"/>
    </ligand>
</feature>
<feature type="glycosylation site" description="N-linked (GlcNAc...) asparagine" evidence="3">
    <location>
        <position position="73"/>
    </location>
</feature>
<feature type="glycosylation site" description="N-linked (GlcNAc...) asparagine" evidence="3">
    <location>
        <position position="119"/>
    </location>
</feature>
<feature type="glycosylation site" description="N-linked (GlcNAc...) asparagine" evidence="3">
    <location>
        <position position="152"/>
    </location>
</feature>
<feature type="glycosylation site" description="N-linked (GlcNAc...) asparagine" evidence="3">
    <location>
        <position position="167"/>
    </location>
</feature>
<feature type="glycosylation site" description="N-linked (GlcNAc...) asparagine" evidence="3">
    <location>
        <position position="204"/>
    </location>
</feature>
<feature type="glycosylation site" description="N-linked (GlcNAc...) asparagine" evidence="3">
    <location>
        <position position="252"/>
    </location>
</feature>
<feature type="glycosylation site" description="N-linked (GlcNAc...) asparagine" evidence="3">
    <location>
        <position position="268"/>
    </location>
</feature>
<feature type="glycosylation site" description="N-linked (GlcNAc...) asparagine" evidence="3">
    <location>
        <position position="318"/>
    </location>
</feature>
<feature type="glycosylation site" description="N-linked (GlcNAc...) asparagine" evidence="3">
    <location>
        <position position="373"/>
    </location>
</feature>
<feature type="glycosylation site" description="N-linked (GlcNAc...) asparagine" evidence="3">
    <location>
        <position position="399"/>
    </location>
</feature>
<feature type="glycosylation site" description="N-linked (GlcNAc...) asparagine" evidence="3">
    <location>
        <position position="536"/>
    </location>
</feature>
<feature type="glycosylation site" description="N-linked (GlcNAc...) asparagine" evidence="3">
    <location>
        <position position="577"/>
    </location>
</feature>
<feature type="splice variant" id="VSP_059529" description="In isoform 2.">
    <location>
        <position position="853"/>
    </location>
</feature>
<feature type="sequence conflict" description="In Ref. 2; AAL12626." evidence="7" ref="2">
    <original>S</original>
    <variation>N</variation>
    <location>
        <position position="509"/>
    </location>
</feature>
<reference key="1">
    <citation type="journal article" date="2010" name="BMC Genomics">
        <title>Genome-wide cloning and sequence analysis of leucine-rich repeat receptor-like protein kinase genes in Arabidopsis thaliana.</title>
        <authorList>
            <person name="Gou X."/>
            <person name="He K."/>
            <person name="Yang H."/>
            <person name="Yuan T."/>
            <person name="Lin H."/>
            <person name="Clouse S.D."/>
            <person name="Li J."/>
        </authorList>
    </citation>
    <scope>NUCLEOTIDE SEQUENCE [MRNA] (ISOFORM 2)</scope>
    <source>
        <strain>cv. Columbia</strain>
    </source>
</reference>
<reference key="2">
    <citation type="submission" date="2001-08" db="EMBL/GenBank/DDBJ databases">
        <title>The sequence of the Arabidopsis thaliana leucine-rich-repeat receptor-like kinase F21M12.36 mRNA as determined by the Spring 2001 MCB 473 class.</title>
        <authorList>
            <person name="Zeitler B."/>
            <person name="Reed R."/>
            <person name="Watson A."/>
            <person name="Zeitler J."/>
            <person name="Miller S."/>
            <person name="Baca J."/>
            <person name="Basinger H."/>
            <person name="Bassett S."/>
            <person name="Brentlinger K."/>
            <person name="Calabro K."/>
            <person name="Crider H."/>
            <person name="Danzl N."/>
            <person name="Daw G."/>
            <person name="Gordon K."/>
            <person name="Haney C."/>
            <person name="Hendrix S."/>
            <person name="Hensley G."/>
            <person name="Ihle N."/>
            <person name="Karney D."/>
            <person name="Keene K."/>
            <person name="Kraft J."/>
            <person name="Kurtis J."/>
            <person name="Lindsey N."/>
            <person name="Mesa O."/>
            <person name="Munoz J."/>
            <person name="Nevarez D."/>
            <person name="Parkin E."/>
            <person name="Ranjel A."/>
            <person name="Rayhorn D."/>
            <person name="Reed C."/>
            <person name="Rogers D."/>
            <person name="Rogers T."/>
            <person name="Runge J."/>
            <person name="Sherwood C."/>
            <person name="Smart T."/>
            <person name="Sutton J."/>
            <person name="Tate W."/>
            <person name="Thompson R."/>
            <person name="White C."/>
            <person name="Wollenberg M."/>
            <person name="Chambers J."/>
            <person name="Tax F."/>
        </authorList>
    </citation>
    <scope>NUCLEOTIDE SEQUENCE [MRNA] (ISOFORM 1)</scope>
</reference>
<reference key="3">
    <citation type="journal article" date="2000" name="Nature">
        <title>Sequence and analysis of chromosome 1 of the plant Arabidopsis thaliana.</title>
        <authorList>
            <person name="Theologis A."/>
            <person name="Ecker J.R."/>
            <person name="Palm C.J."/>
            <person name="Federspiel N.A."/>
            <person name="Kaul S."/>
            <person name="White O."/>
            <person name="Alonso J."/>
            <person name="Altafi H."/>
            <person name="Araujo R."/>
            <person name="Bowman C.L."/>
            <person name="Brooks S.Y."/>
            <person name="Buehler E."/>
            <person name="Chan A."/>
            <person name="Chao Q."/>
            <person name="Chen H."/>
            <person name="Cheuk R.F."/>
            <person name="Chin C.W."/>
            <person name="Chung M.K."/>
            <person name="Conn L."/>
            <person name="Conway A.B."/>
            <person name="Conway A.R."/>
            <person name="Creasy T.H."/>
            <person name="Dewar K."/>
            <person name="Dunn P."/>
            <person name="Etgu P."/>
            <person name="Feldblyum T.V."/>
            <person name="Feng J.-D."/>
            <person name="Fong B."/>
            <person name="Fujii C.Y."/>
            <person name="Gill J.E."/>
            <person name="Goldsmith A.D."/>
            <person name="Haas B."/>
            <person name="Hansen N.F."/>
            <person name="Hughes B."/>
            <person name="Huizar L."/>
            <person name="Hunter J.L."/>
            <person name="Jenkins J."/>
            <person name="Johnson-Hopson C."/>
            <person name="Khan S."/>
            <person name="Khaykin E."/>
            <person name="Kim C.J."/>
            <person name="Koo H.L."/>
            <person name="Kremenetskaia I."/>
            <person name="Kurtz D.B."/>
            <person name="Kwan A."/>
            <person name="Lam B."/>
            <person name="Langin-Hooper S."/>
            <person name="Lee A."/>
            <person name="Lee J.M."/>
            <person name="Lenz C.A."/>
            <person name="Li J.H."/>
            <person name="Li Y.-P."/>
            <person name="Lin X."/>
            <person name="Liu S.X."/>
            <person name="Liu Z.A."/>
            <person name="Luros J.S."/>
            <person name="Maiti R."/>
            <person name="Marziali A."/>
            <person name="Militscher J."/>
            <person name="Miranda M."/>
            <person name="Nguyen M."/>
            <person name="Nierman W.C."/>
            <person name="Osborne B.I."/>
            <person name="Pai G."/>
            <person name="Peterson J."/>
            <person name="Pham P.K."/>
            <person name="Rizzo M."/>
            <person name="Rooney T."/>
            <person name="Rowley D."/>
            <person name="Sakano H."/>
            <person name="Salzberg S.L."/>
            <person name="Schwartz J.R."/>
            <person name="Shinn P."/>
            <person name="Southwick A.M."/>
            <person name="Sun H."/>
            <person name="Tallon L.J."/>
            <person name="Tambunga G."/>
            <person name="Toriumi M.J."/>
            <person name="Town C.D."/>
            <person name="Utterback T."/>
            <person name="Van Aken S."/>
            <person name="Vaysberg M."/>
            <person name="Vysotskaia V.S."/>
            <person name="Walker M."/>
            <person name="Wu D."/>
            <person name="Yu G."/>
            <person name="Fraser C.M."/>
            <person name="Venter J.C."/>
            <person name="Davis R.W."/>
        </authorList>
    </citation>
    <scope>NUCLEOTIDE SEQUENCE [LARGE SCALE GENOMIC DNA]</scope>
    <source>
        <strain>cv. Columbia</strain>
    </source>
</reference>
<reference key="4">
    <citation type="journal article" date="2017" name="Plant J.">
        <title>Araport11: a complete reannotation of the Arabidopsis thaliana reference genome.</title>
        <authorList>
            <person name="Cheng C.Y."/>
            <person name="Krishnakumar V."/>
            <person name="Chan A.P."/>
            <person name="Thibaud-Nissen F."/>
            <person name="Schobel S."/>
            <person name="Town C.D."/>
        </authorList>
    </citation>
    <scope>GENOME REANNOTATION</scope>
    <source>
        <strain>cv. Columbia</strain>
    </source>
</reference>
<reference key="5">
    <citation type="journal article" date="2003" name="Science">
        <title>Empirical analysis of transcriptional activity in the Arabidopsis genome.</title>
        <authorList>
            <person name="Yamada K."/>
            <person name="Lim J."/>
            <person name="Dale J.M."/>
            <person name="Chen H."/>
            <person name="Shinn P."/>
            <person name="Palm C.J."/>
            <person name="Southwick A.M."/>
            <person name="Wu H.C."/>
            <person name="Kim C.J."/>
            <person name="Nguyen M."/>
            <person name="Pham P.K."/>
            <person name="Cheuk R.F."/>
            <person name="Karlin-Newmann G."/>
            <person name="Liu S.X."/>
            <person name="Lam B."/>
            <person name="Sakano H."/>
            <person name="Wu T."/>
            <person name="Yu G."/>
            <person name="Miranda M."/>
            <person name="Quach H.L."/>
            <person name="Tripp M."/>
            <person name="Chang C.H."/>
            <person name="Lee J.M."/>
            <person name="Toriumi M.J."/>
            <person name="Chan M.M."/>
            <person name="Tang C.C."/>
            <person name="Onodera C.S."/>
            <person name="Deng J.M."/>
            <person name="Akiyama K."/>
            <person name="Ansari Y."/>
            <person name="Arakawa T."/>
            <person name="Banh J."/>
            <person name="Banno F."/>
            <person name="Bowser L."/>
            <person name="Brooks S.Y."/>
            <person name="Carninci P."/>
            <person name="Chao Q."/>
            <person name="Choy N."/>
            <person name="Enju A."/>
            <person name="Goldsmith A.D."/>
            <person name="Gurjal M."/>
            <person name="Hansen N.F."/>
            <person name="Hayashizaki Y."/>
            <person name="Johnson-Hopson C."/>
            <person name="Hsuan V.W."/>
            <person name="Iida K."/>
            <person name="Karnes M."/>
            <person name="Khan S."/>
            <person name="Koesema E."/>
            <person name="Ishida J."/>
            <person name="Jiang P.X."/>
            <person name="Jones T."/>
            <person name="Kawai J."/>
            <person name="Kamiya A."/>
            <person name="Meyers C."/>
            <person name="Nakajima M."/>
            <person name="Narusaka M."/>
            <person name="Seki M."/>
            <person name="Sakurai T."/>
            <person name="Satou M."/>
            <person name="Tamse R."/>
            <person name="Vaysberg M."/>
            <person name="Wallender E.K."/>
            <person name="Wong C."/>
            <person name="Yamamura Y."/>
            <person name="Yuan S."/>
            <person name="Shinozaki K."/>
            <person name="Davis R.W."/>
            <person name="Theologis A."/>
            <person name="Ecker J.R."/>
        </authorList>
    </citation>
    <scope>NUCLEOTIDE SEQUENCE [LARGE SCALE MRNA] (ISOFORM 2)</scope>
    <source>
        <strain>cv. Columbia</strain>
    </source>
</reference>
<reference key="6">
    <citation type="submission" date="2005-03" db="EMBL/GenBank/DDBJ databases">
        <title>Large-scale analysis of RIKEN Arabidopsis full-length (RAFL) cDNAs.</title>
        <authorList>
            <person name="Totoki Y."/>
            <person name="Seki M."/>
            <person name="Ishida J."/>
            <person name="Nakajima M."/>
            <person name="Enju A."/>
            <person name="Kamiya A."/>
            <person name="Narusaka M."/>
            <person name="Shin-i T."/>
            <person name="Nakagawa M."/>
            <person name="Sakamoto N."/>
            <person name="Oishi K."/>
            <person name="Kohara Y."/>
            <person name="Kobayashi M."/>
            <person name="Toyoda A."/>
            <person name="Sakaki Y."/>
            <person name="Sakurai T."/>
            <person name="Iida K."/>
            <person name="Akiyama K."/>
            <person name="Satou M."/>
            <person name="Toyoda T."/>
            <person name="Konagaya A."/>
            <person name="Carninci P."/>
            <person name="Kawai J."/>
            <person name="Hayashizaki Y."/>
            <person name="Shinozaki K."/>
        </authorList>
    </citation>
    <scope>NUCLEOTIDE SEQUENCE [LARGE SCALE MRNA] OF 655-977 (ISOFORM 2)</scope>
    <source>
        <strain>cv. Columbia</strain>
    </source>
</reference>
<reference key="7">
    <citation type="journal article" date="2010" name="Planta">
        <title>RLK7, a leucine-rich repeat receptor-like kinase, is required for proper germination speed and tolerance to oxidative stress in Arabidopsis thaliana.</title>
        <authorList>
            <person name="Pitorre D."/>
            <person name="Llauro C."/>
            <person name="Jobet E."/>
            <person name="Guilleminot J."/>
            <person name="Brizard J.P."/>
            <person name="Delseny M."/>
            <person name="Lasserre E."/>
        </authorList>
    </citation>
    <scope>FUNCTION</scope>
    <scope>TISSUE SPECIFICITY</scope>
    <scope>DEVELOPMENTAL STAGE</scope>
    <scope>DISRUPTION PHENOTYPE</scope>
</reference>
<reference key="8">
    <citation type="journal article" date="2014" name="PLoS Pathog.">
        <title>The secreted peptide PIP1 amplifies immunity through receptor-like kinase 7.</title>
        <authorList>
            <person name="Hou S."/>
            <person name="Wang X."/>
            <person name="Chen D."/>
            <person name="Yang X."/>
            <person name="Wang M."/>
            <person name="Turra D."/>
            <person name="Di Pietro A."/>
            <person name="Zhang W."/>
        </authorList>
    </citation>
    <scope>FUNCTION</scope>
    <scope>INTERACTION WITH PIP1</scope>
</reference>
<name>RLK7_ARATH</name>
<gene>
    <name evidence="6" type="primary">RLK7</name>
    <name evidence="8" type="ordered locus">At1g09970</name>
    <name evidence="9" type="ORF">F21M12.36</name>
</gene>
<organism>
    <name type="scientific">Arabidopsis thaliana</name>
    <name type="common">Mouse-ear cress</name>
    <dbReference type="NCBI Taxonomy" id="3702"/>
    <lineage>
        <taxon>Eukaryota</taxon>
        <taxon>Viridiplantae</taxon>
        <taxon>Streptophyta</taxon>
        <taxon>Embryophyta</taxon>
        <taxon>Tracheophyta</taxon>
        <taxon>Spermatophyta</taxon>
        <taxon>Magnoliopsida</taxon>
        <taxon>eudicotyledons</taxon>
        <taxon>Gunneridae</taxon>
        <taxon>Pentapetalae</taxon>
        <taxon>rosids</taxon>
        <taxon>malvids</taxon>
        <taxon>Brassicales</taxon>
        <taxon>Brassicaceae</taxon>
        <taxon>Camelineae</taxon>
        <taxon>Arabidopsis</taxon>
    </lineage>
</organism>
<sequence>MAPSLRNFNFFHRFSTFLVFSLFSVVSSDDLQVLLKLKSSFADSNLAVFDSWKLNSGIGPCSFIGVTCNSRGNVTEIDLSRRGLSGNFPFDSVCEIQSLEKLSLGFNSLSGIIPSDLKNCTSLKYLDLGNNLFSGAFPEFSSLNQLQFLYLNNSAFSGVFPWKSLRNATSLVVLSLGDNPFDATADFPVEVVSLKKLSWLYLSNCSIAGKIPPAIGDLTELRNLEISDSGLTGEIPSEISKLTNLWQLELYNNSLTGKLPTGFGNLKNLTYLDASTNLLQGDLSELRSLTNLVSLQMFENEFSGEIPLEFGEFKDLVNLSLYTNKLTGSLPQGLGSLADFDFIDASENLLTGPIPPDMCKNGKMKALLLLQNNLTGSIPESYANCLTLQRFRVSENNLNGTVPAGLWGLPKLEIIDIEMNNFEGPITADIKNGKMLGALYLGFNKLSDELPEEIGDTESLTKVELNNNRFTGKIPSSIGKLKGLSSLKMQSNGFSGEIPDSIGSCSMLSDVNMAQNSISGEIPHTLGSLPTLNALNLSDNKLSGRIPESLSSLRLSLLDLSNNRLSGRIPLSLSSYNGSFNGNPGLCSTTIKSFNRCINPSRSHGDTRVFVLCIVFGLLILLASLVFFLYLKKTEKKEGRSLKHESWSIKSFRKMSFTEDDIIDSIKEENLIGRGGCGDVYRVVLGDGKEVAVKHIRCSSTQKNFSSAMPILTEREGRSKEFETEVQTLSSIRHLNVVKLYCSITSDDSSLLVYEYLPNGSLWDMLHSCKKSNLGWETRYDIALGAAKGLEYLHHGYERPVIHRDVKSSNILLDEFLKPRIADFGLAKILQASNGGPESTHVVAGTYGYIAPAEYGYASKVTEKCDVYSFGVVLMELVTGKKPIEAEFGESKDIVNWVSNNLKSKESVMEIVDKKIGEMYREDAVKMLRIAIICTARLPGLRPTMRSVVQMIEDAEPCRLMGIVISKESDVKVKEIS</sequence>